<name>CH60_NEIG1</name>
<keyword id="KW-0067">ATP-binding</keyword>
<keyword id="KW-0143">Chaperone</keyword>
<keyword id="KW-0963">Cytoplasm</keyword>
<keyword id="KW-0413">Isomerase</keyword>
<keyword id="KW-0547">Nucleotide-binding</keyword>
<keyword id="KW-1185">Reference proteome</keyword>
<accession>Q5F541</accession>
<sequence>MAAKDVQFGNEVRQKMVNGVNILANAVRVTLGPKGRNVVVDRAFGGPHITKDGVTVAKEIELKDKFENMGAQMVKEVASKTNDVAGDGTTTATVLAQSIVAEGMKYVTAGMNPTDLKRGIDKAVAALVEELKNIAKPCDTSKEIAQVGSISANSDEQVGAIIAEAMEKVGKEGVITVEDGKSLENELDVVEGMQFDRGYLSPYFINDAEKQIAGLDNPFVLLFDKKISNIRDLLPVLEQVAKASRPLLIIAEDVEGEALATLVVNNIRGILKTVAVKAPGFGDRRKAMLQDIAILTGGVVISEEVGLSLEKATLDDLGQAKRIEIGKENTTVIDGFGDAAQIEARVAEIRQQIETATSDYDKEKLQERVAKLAGGVAVIKVGAATEVEMKEKKDRVEDALHATRAAVEEGVVAGGGVALLRARAALENLHTGNADQDAGVQIVLRAVESPLRQIVANAGGEPSVVVNKVLEGKGNYGYNAGSGEYGDMIGMGVLDPAKVTRSALQHAASIAGLMLTTDCMIAEIPEEKPAVPDMGGMGGMGGMM</sequence>
<gene>
    <name evidence="1" type="primary">groEL</name>
    <name evidence="1" type="synonym">groL</name>
    <name type="ordered locus">NGO_2095</name>
</gene>
<feature type="chain" id="PRO_0000063458" description="Chaperonin GroEL">
    <location>
        <begin position="1"/>
        <end position="544"/>
    </location>
</feature>
<feature type="binding site" evidence="1">
    <location>
        <begin position="30"/>
        <end position="33"/>
    </location>
    <ligand>
        <name>ATP</name>
        <dbReference type="ChEBI" id="CHEBI:30616"/>
    </ligand>
</feature>
<feature type="binding site" evidence="1">
    <location>
        <position position="51"/>
    </location>
    <ligand>
        <name>ATP</name>
        <dbReference type="ChEBI" id="CHEBI:30616"/>
    </ligand>
</feature>
<feature type="binding site" evidence="1">
    <location>
        <begin position="87"/>
        <end position="91"/>
    </location>
    <ligand>
        <name>ATP</name>
        <dbReference type="ChEBI" id="CHEBI:30616"/>
    </ligand>
</feature>
<feature type="binding site" evidence="1">
    <location>
        <position position="415"/>
    </location>
    <ligand>
        <name>ATP</name>
        <dbReference type="ChEBI" id="CHEBI:30616"/>
    </ligand>
</feature>
<feature type="binding site" evidence="1">
    <location>
        <position position="495"/>
    </location>
    <ligand>
        <name>ATP</name>
        <dbReference type="ChEBI" id="CHEBI:30616"/>
    </ligand>
</feature>
<reference key="1">
    <citation type="submission" date="2003-03" db="EMBL/GenBank/DDBJ databases">
        <title>The complete genome sequence of Neisseria gonorrhoeae.</title>
        <authorList>
            <person name="Lewis L.A."/>
            <person name="Gillaspy A.F."/>
            <person name="McLaughlin R.E."/>
            <person name="Gipson M."/>
            <person name="Ducey T.F."/>
            <person name="Ownbey T."/>
            <person name="Hartman K."/>
            <person name="Nydick C."/>
            <person name="Carson M.B."/>
            <person name="Vaughn J."/>
            <person name="Thomson C."/>
            <person name="Song L."/>
            <person name="Lin S."/>
            <person name="Yuan X."/>
            <person name="Najar F."/>
            <person name="Zhan M."/>
            <person name="Ren Q."/>
            <person name="Zhu H."/>
            <person name="Qi S."/>
            <person name="Kenton S.M."/>
            <person name="Lai H."/>
            <person name="White J.D."/>
            <person name="Clifton S."/>
            <person name="Roe B.A."/>
            <person name="Dyer D.W."/>
        </authorList>
    </citation>
    <scope>NUCLEOTIDE SEQUENCE [LARGE SCALE GENOMIC DNA]</scope>
    <source>
        <strain>ATCC 700825 / FA 1090</strain>
    </source>
</reference>
<dbReference type="EC" id="5.6.1.7" evidence="1"/>
<dbReference type="EMBL" id="AE004969">
    <property type="protein sequence ID" value="AAW90696.1"/>
    <property type="molecule type" value="Genomic_DNA"/>
</dbReference>
<dbReference type="RefSeq" id="WP_003694628.1">
    <property type="nucleotide sequence ID" value="NC_002946.2"/>
</dbReference>
<dbReference type="RefSeq" id="YP_209108.1">
    <property type="nucleotide sequence ID" value="NC_002946.2"/>
</dbReference>
<dbReference type="SMR" id="Q5F541"/>
<dbReference type="STRING" id="242231.NGO_2095"/>
<dbReference type="KEGG" id="ngo:NGO_2095"/>
<dbReference type="PATRIC" id="fig|242231.10.peg.2535"/>
<dbReference type="HOGENOM" id="CLU_016503_3_0_4"/>
<dbReference type="Proteomes" id="UP000000535">
    <property type="component" value="Chromosome"/>
</dbReference>
<dbReference type="GO" id="GO:0005737">
    <property type="term" value="C:cytoplasm"/>
    <property type="evidence" value="ECO:0007669"/>
    <property type="project" value="UniProtKB-SubCell"/>
</dbReference>
<dbReference type="GO" id="GO:0005524">
    <property type="term" value="F:ATP binding"/>
    <property type="evidence" value="ECO:0007669"/>
    <property type="project" value="UniProtKB-UniRule"/>
</dbReference>
<dbReference type="GO" id="GO:0140662">
    <property type="term" value="F:ATP-dependent protein folding chaperone"/>
    <property type="evidence" value="ECO:0007669"/>
    <property type="project" value="InterPro"/>
</dbReference>
<dbReference type="GO" id="GO:0016853">
    <property type="term" value="F:isomerase activity"/>
    <property type="evidence" value="ECO:0007669"/>
    <property type="project" value="UniProtKB-KW"/>
</dbReference>
<dbReference type="GO" id="GO:0051082">
    <property type="term" value="F:unfolded protein binding"/>
    <property type="evidence" value="ECO:0007669"/>
    <property type="project" value="UniProtKB-UniRule"/>
</dbReference>
<dbReference type="GO" id="GO:0042026">
    <property type="term" value="P:protein refolding"/>
    <property type="evidence" value="ECO:0007669"/>
    <property type="project" value="UniProtKB-UniRule"/>
</dbReference>
<dbReference type="CDD" id="cd03344">
    <property type="entry name" value="GroEL"/>
    <property type="match status" value="1"/>
</dbReference>
<dbReference type="FunFam" id="1.10.560.10:FF:000001">
    <property type="entry name" value="60 kDa chaperonin"/>
    <property type="match status" value="1"/>
</dbReference>
<dbReference type="FunFam" id="3.50.7.10:FF:000001">
    <property type="entry name" value="60 kDa chaperonin"/>
    <property type="match status" value="1"/>
</dbReference>
<dbReference type="Gene3D" id="3.50.7.10">
    <property type="entry name" value="GroEL"/>
    <property type="match status" value="1"/>
</dbReference>
<dbReference type="Gene3D" id="1.10.560.10">
    <property type="entry name" value="GroEL-like equatorial domain"/>
    <property type="match status" value="1"/>
</dbReference>
<dbReference type="Gene3D" id="3.30.260.10">
    <property type="entry name" value="TCP-1-like chaperonin intermediate domain"/>
    <property type="match status" value="1"/>
</dbReference>
<dbReference type="HAMAP" id="MF_00600">
    <property type="entry name" value="CH60"/>
    <property type="match status" value="1"/>
</dbReference>
<dbReference type="InterPro" id="IPR018370">
    <property type="entry name" value="Chaperonin_Cpn60_CS"/>
</dbReference>
<dbReference type="InterPro" id="IPR001844">
    <property type="entry name" value="Cpn60/GroEL"/>
</dbReference>
<dbReference type="InterPro" id="IPR002423">
    <property type="entry name" value="Cpn60/GroEL/TCP-1"/>
</dbReference>
<dbReference type="InterPro" id="IPR027409">
    <property type="entry name" value="GroEL-like_apical_dom_sf"/>
</dbReference>
<dbReference type="InterPro" id="IPR027413">
    <property type="entry name" value="GROEL-like_equatorial_sf"/>
</dbReference>
<dbReference type="InterPro" id="IPR027410">
    <property type="entry name" value="TCP-1-like_intermed_sf"/>
</dbReference>
<dbReference type="NCBIfam" id="TIGR02348">
    <property type="entry name" value="GroEL"/>
    <property type="match status" value="1"/>
</dbReference>
<dbReference type="NCBIfam" id="NF000592">
    <property type="entry name" value="PRK00013.1"/>
    <property type="match status" value="1"/>
</dbReference>
<dbReference type="NCBIfam" id="NF009487">
    <property type="entry name" value="PRK12849.1"/>
    <property type="match status" value="1"/>
</dbReference>
<dbReference type="NCBIfam" id="NF009488">
    <property type="entry name" value="PRK12850.1"/>
    <property type="match status" value="1"/>
</dbReference>
<dbReference type="NCBIfam" id="NF009489">
    <property type="entry name" value="PRK12851.1"/>
    <property type="match status" value="1"/>
</dbReference>
<dbReference type="PANTHER" id="PTHR45633">
    <property type="entry name" value="60 KDA HEAT SHOCK PROTEIN, MITOCHONDRIAL"/>
    <property type="match status" value="1"/>
</dbReference>
<dbReference type="Pfam" id="PF00118">
    <property type="entry name" value="Cpn60_TCP1"/>
    <property type="match status" value="1"/>
</dbReference>
<dbReference type="PRINTS" id="PR00298">
    <property type="entry name" value="CHAPERONIN60"/>
</dbReference>
<dbReference type="SUPFAM" id="SSF52029">
    <property type="entry name" value="GroEL apical domain-like"/>
    <property type="match status" value="1"/>
</dbReference>
<dbReference type="SUPFAM" id="SSF48592">
    <property type="entry name" value="GroEL equatorial domain-like"/>
    <property type="match status" value="1"/>
</dbReference>
<dbReference type="SUPFAM" id="SSF54849">
    <property type="entry name" value="GroEL-intermediate domain like"/>
    <property type="match status" value="1"/>
</dbReference>
<dbReference type="PROSITE" id="PS00296">
    <property type="entry name" value="CHAPERONINS_CPN60"/>
    <property type="match status" value="1"/>
</dbReference>
<comment type="function">
    <text evidence="1">Together with its co-chaperonin GroES, plays an essential role in assisting protein folding. The GroEL-GroES system forms a nano-cage that allows encapsulation of the non-native substrate proteins and provides a physical environment optimized to promote and accelerate protein folding.</text>
</comment>
<comment type="catalytic activity">
    <reaction evidence="1">
        <text>ATP + H2O + a folded polypeptide = ADP + phosphate + an unfolded polypeptide.</text>
        <dbReference type="EC" id="5.6.1.7"/>
    </reaction>
</comment>
<comment type="subunit">
    <text evidence="1">Forms a cylinder of 14 subunits composed of two heptameric rings stacked back-to-back. Interacts with the co-chaperonin GroES.</text>
</comment>
<comment type="subcellular location">
    <subcellularLocation>
        <location evidence="1">Cytoplasm</location>
    </subcellularLocation>
</comment>
<comment type="similarity">
    <text evidence="1">Belongs to the chaperonin (HSP60) family.</text>
</comment>
<evidence type="ECO:0000255" key="1">
    <source>
        <dbReference type="HAMAP-Rule" id="MF_00600"/>
    </source>
</evidence>
<proteinExistence type="inferred from homology"/>
<protein>
    <recommendedName>
        <fullName evidence="1">Chaperonin GroEL</fullName>
        <ecNumber evidence="1">5.6.1.7</ecNumber>
    </recommendedName>
    <alternativeName>
        <fullName evidence="1">60 kDa chaperonin</fullName>
    </alternativeName>
    <alternativeName>
        <fullName evidence="1">Chaperonin-60</fullName>
        <shortName evidence="1">Cpn60</shortName>
    </alternativeName>
</protein>
<organism>
    <name type="scientific">Neisseria gonorrhoeae (strain ATCC 700825 / FA 1090)</name>
    <dbReference type="NCBI Taxonomy" id="242231"/>
    <lineage>
        <taxon>Bacteria</taxon>
        <taxon>Pseudomonadati</taxon>
        <taxon>Pseudomonadota</taxon>
        <taxon>Betaproteobacteria</taxon>
        <taxon>Neisseriales</taxon>
        <taxon>Neisseriaceae</taxon>
        <taxon>Neisseria</taxon>
    </lineage>
</organism>